<organism>
    <name type="scientific">Yersinia pestis (strain Pestoides F)</name>
    <dbReference type="NCBI Taxonomy" id="386656"/>
    <lineage>
        <taxon>Bacteria</taxon>
        <taxon>Pseudomonadati</taxon>
        <taxon>Pseudomonadota</taxon>
        <taxon>Gammaproteobacteria</taxon>
        <taxon>Enterobacterales</taxon>
        <taxon>Yersiniaceae</taxon>
        <taxon>Yersinia</taxon>
    </lineage>
</organism>
<gene>
    <name evidence="1" type="primary">bamA</name>
    <name type="synonym">yaeT</name>
    <name type="ordered locus">YPDSF_1660</name>
</gene>
<keyword id="KW-0998">Cell outer membrane</keyword>
<keyword id="KW-0472">Membrane</keyword>
<keyword id="KW-0677">Repeat</keyword>
<keyword id="KW-0732">Signal</keyword>
<keyword id="KW-0812">Transmembrane</keyword>
<keyword id="KW-1134">Transmembrane beta strand</keyword>
<comment type="function">
    <text evidence="1">Part of the outer membrane protein assembly complex, which is involved in assembly and insertion of beta-barrel proteins into the outer membrane. Constitutes, with BamD, the core component of the assembly machinery.</text>
</comment>
<comment type="subunit">
    <text evidence="1">Part of the Bam complex, which is composed of the outer membrane protein BamA, and four lipoproteins BamB, BamC, BamD and BamE.</text>
</comment>
<comment type="subcellular location">
    <subcellularLocation>
        <location evidence="1">Cell outer membrane</location>
    </subcellularLocation>
</comment>
<comment type="similarity">
    <text evidence="1">Belongs to the BamA family.</text>
</comment>
<reference key="1">
    <citation type="submission" date="2007-02" db="EMBL/GenBank/DDBJ databases">
        <title>Complete sequence of chromosome of Yersinia pestis Pestoides F.</title>
        <authorList>
            <consortium name="US DOE Joint Genome Institute"/>
            <person name="Copeland A."/>
            <person name="Lucas S."/>
            <person name="Lapidus A."/>
            <person name="Barry K."/>
            <person name="Detter J.C."/>
            <person name="Glavina del Rio T."/>
            <person name="Hammon N."/>
            <person name="Israni S."/>
            <person name="Dalin E."/>
            <person name="Tice H."/>
            <person name="Pitluck S."/>
            <person name="Di Bartolo G."/>
            <person name="Chain P."/>
            <person name="Malfatti S."/>
            <person name="Shin M."/>
            <person name="Vergez L."/>
            <person name="Schmutz J."/>
            <person name="Larimer F."/>
            <person name="Land M."/>
            <person name="Hauser L."/>
            <person name="Worsham P."/>
            <person name="Chu M."/>
            <person name="Bearden S."/>
            <person name="Garcia E."/>
            <person name="Richardson P."/>
        </authorList>
    </citation>
    <scope>NUCLEOTIDE SEQUENCE [LARGE SCALE GENOMIC DNA]</scope>
    <source>
        <strain>Pestoides F</strain>
    </source>
</reference>
<sequence length="795" mass="87838">MAMKKLLIASLLFGSATVYGADGFVVNDIHFEGLQRVAVGAALLNMPVRVGDTVSDDDIGKTIRALFATGNFEDVRVLRDGNTLIVQVKERPTIASITFSGNKAVKEDMLKQNLEASGVRVGEALDRTTISNIEKGLEDFYYSVGKYSASVKAVVTPLPRNRVDLKLVFTEGVSAKIQQINIVGNHSFTTDELISRFQLRDEVPWWNVVGDRKYQKQKLAGDLETLRSFYLDRGYARFNIDSTQVSLTPDKKGIYVTINITEGPQFKLNSVIVSGNLAGHQSEAEKLTKIEPGELFNGSKVTRMEDDIKKMLGRYGYAYPRVVTQPEINDDDKTVKLHINVDAGNRFYVRHIRFEGNDTSKDSVLRREMRQMEGAWLGNDQVEAGKERLNRLGYFETVDVETQRVPGAADLVDVTYKVKERNTGSLNFGIGYGTESGVSFQVGVQQDNWLGTGNTVGINGTKNDYQTYAEFTLMDPYFTVDGVSLGGRIFYNDFKADNADLSGYTNSSYGADGTLGFPINENNSLRVGVGYVHNDLSDMLPQVAMWRYLESVGERPGYDGREGFTTDDFTLNLGWTYNNLDRGFFPTSGVKSSVNTKITVPGSDNEFYKVTFDTSAYQPLNEDRSWVLLGRGRLGYGDGIGSKEMPFYENFYAGGSSTVRGFRSNNIGPKAAYYANGGATVTNSTDAVGGNAMAVASIELITPTPFISEKYSNSVRTSIFIDSGTVWDTNWENTAKTRAAGIPDYGKASNIRVSAGVALQWMSPLGPLVFSYAKPVKDYEGDKSEQFQFNIGKTW</sequence>
<proteinExistence type="inferred from homology"/>
<accession>A4TL83</accession>
<evidence type="ECO:0000255" key="1">
    <source>
        <dbReference type="HAMAP-Rule" id="MF_01430"/>
    </source>
</evidence>
<evidence type="ECO:0000255" key="2">
    <source>
        <dbReference type="PROSITE-ProRule" id="PRU01115"/>
    </source>
</evidence>
<protein>
    <recommendedName>
        <fullName evidence="1">Outer membrane protein assembly factor BamA</fullName>
    </recommendedName>
</protein>
<feature type="signal peptide" evidence="1">
    <location>
        <begin position="1"/>
        <end position="20"/>
    </location>
</feature>
<feature type="chain" id="PRO_5000236768" description="Outer membrane protein assembly factor BamA">
    <location>
        <begin position="21"/>
        <end position="795"/>
    </location>
</feature>
<feature type="domain" description="POTRA 1" evidence="2">
    <location>
        <begin position="24"/>
        <end position="91"/>
    </location>
</feature>
<feature type="domain" description="POTRA 2" evidence="2">
    <location>
        <begin position="92"/>
        <end position="172"/>
    </location>
</feature>
<feature type="domain" description="POTRA 3" evidence="2">
    <location>
        <begin position="175"/>
        <end position="263"/>
    </location>
</feature>
<feature type="domain" description="POTRA 4" evidence="2">
    <location>
        <begin position="266"/>
        <end position="344"/>
    </location>
</feature>
<feature type="domain" description="POTRA 5" evidence="2">
    <location>
        <begin position="347"/>
        <end position="421"/>
    </location>
</feature>
<dbReference type="EMBL" id="CP000668">
    <property type="protein sequence ID" value="ABP40045.1"/>
    <property type="molecule type" value="Genomic_DNA"/>
</dbReference>
<dbReference type="RefSeq" id="WP_002212139.1">
    <property type="nucleotide sequence ID" value="NZ_CP009715.1"/>
</dbReference>
<dbReference type="SMR" id="A4TL83"/>
<dbReference type="GeneID" id="57977509"/>
<dbReference type="KEGG" id="ypp:YPDSF_1660"/>
<dbReference type="PATRIC" id="fig|386656.14.peg.2102"/>
<dbReference type="GO" id="GO:1990063">
    <property type="term" value="C:Bam protein complex"/>
    <property type="evidence" value="ECO:0007669"/>
    <property type="project" value="TreeGrafter"/>
</dbReference>
<dbReference type="GO" id="GO:0043165">
    <property type="term" value="P:Gram-negative-bacterium-type cell outer membrane assembly"/>
    <property type="evidence" value="ECO:0007669"/>
    <property type="project" value="UniProtKB-UniRule"/>
</dbReference>
<dbReference type="GO" id="GO:0051205">
    <property type="term" value="P:protein insertion into membrane"/>
    <property type="evidence" value="ECO:0007669"/>
    <property type="project" value="UniProtKB-UniRule"/>
</dbReference>
<dbReference type="FunFam" id="2.40.160.50:FF:000001">
    <property type="entry name" value="Outer membrane protein assembly factor BamA"/>
    <property type="match status" value="1"/>
</dbReference>
<dbReference type="FunFam" id="3.10.20.310:FF:000001">
    <property type="entry name" value="Outer membrane protein assembly factor BamA"/>
    <property type="match status" value="1"/>
</dbReference>
<dbReference type="FunFam" id="3.10.20.310:FF:000002">
    <property type="entry name" value="Outer membrane protein assembly factor BamA"/>
    <property type="match status" value="1"/>
</dbReference>
<dbReference type="FunFam" id="3.10.20.310:FF:000003">
    <property type="entry name" value="Outer membrane protein assembly factor BamA"/>
    <property type="match status" value="1"/>
</dbReference>
<dbReference type="FunFam" id="3.10.20.310:FF:000004">
    <property type="entry name" value="Outer membrane protein assembly factor BamA"/>
    <property type="match status" value="1"/>
</dbReference>
<dbReference type="FunFam" id="3.10.20.310:FF:000005">
    <property type="entry name" value="Outer membrane protein assembly factor BamA"/>
    <property type="match status" value="1"/>
</dbReference>
<dbReference type="Gene3D" id="3.10.20.310">
    <property type="entry name" value="membrane protein fhac"/>
    <property type="match status" value="5"/>
</dbReference>
<dbReference type="Gene3D" id="2.40.160.50">
    <property type="entry name" value="membrane protein fhac: a member of the omp85/tpsb transporter family"/>
    <property type="match status" value="1"/>
</dbReference>
<dbReference type="HAMAP" id="MF_01430">
    <property type="entry name" value="OM_assembly_BamA"/>
    <property type="match status" value="1"/>
</dbReference>
<dbReference type="InterPro" id="IPR000184">
    <property type="entry name" value="Bac_surfAg_D15"/>
</dbReference>
<dbReference type="InterPro" id="IPR010827">
    <property type="entry name" value="BamA/TamA_POTRA"/>
</dbReference>
<dbReference type="InterPro" id="IPR039910">
    <property type="entry name" value="D15-like"/>
</dbReference>
<dbReference type="InterPro" id="IPR023707">
    <property type="entry name" value="OM_assembly_BamA"/>
</dbReference>
<dbReference type="InterPro" id="IPR034746">
    <property type="entry name" value="POTRA"/>
</dbReference>
<dbReference type="NCBIfam" id="TIGR03303">
    <property type="entry name" value="OM_YaeT"/>
    <property type="match status" value="1"/>
</dbReference>
<dbReference type="NCBIfam" id="NF008287">
    <property type="entry name" value="PRK11067.1"/>
    <property type="match status" value="1"/>
</dbReference>
<dbReference type="PANTHER" id="PTHR12815:SF23">
    <property type="entry name" value="OUTER MEMBRANE PROTEIN ASSEMBLY FACTOR BAMA"/>
    <property type="match status" value="1"/>
</dbReference>
<dbReference type="PANTHER" id="PTHR12815">
    <property type="entry name" value="SORTING AND ASSEMBLY MACHINERY SAMM50 PROTEIN FAMILY MEMBER"/>
    <property type="match status" value="1"/>
</dbReference>
<dbReference type="Pfam" id="PF01103">
    <property type="entry name" value="Omp85"/>
    <property type="match status" value="1"/>
</dbReference>
<dbReference type="Pfam" id="PF07244">
    <property type="entry name" value="POTRA"/>
    <property type="match status" value="4"/>
</dbReference>
<dbReference type="PIRSF" id="PIRSF006076">
    <property type="entry name" value="OM_assembly_OMP85"/>
    <property type="match status" value="1"/>
</dbReference>
<dbReference type="PROSITE" id="PS51779">
    <property type="entry name" value="POTRA"/>
    <property type="match status" value="5"/>
</dbReference>
<name>BAMA_YERPP</name>